<protein>
    <recommendedName>
        <fullName evidence="1">Ribosomal RNA small subunit methyltransferase C</fullName>
        <ecNumber evidence="1">2.1.1.172</ecNumber>
    </recommendedName>
    <alternativeName>
        <fullName evidence="1">16S rRNA m2G1207 methyltransferase</fullName>
    </alternativeName>
    <alternativeName>
        <fullName evidence="1">rRNA (guanine-N(2)-)-methyltransferase RsmC</fullName>
    </alternativeName>
</protein>
<sequence length="347" mass="37829">MSALTPASEVILRHSDEFIARHVLFAGDLQDALPAQFDAAGVRVHTNQYHHWQLLSNTLEENVQFGLLATAETLAACDTLIYYWPKSKQEAQFQLANLLSILPVGTDIFVVGENRSGVRSAEEMLADFAQLAKIDSARRCGLYHGRLDKQPEFDADAWWESYQVGSVTVKTLPGVFSRDSLDSGSHLLLSTFNEPFKGSVLDVGCGAGVLASVLAQQSPKIKWTLSDVSAAAIEASRATLAVNNIEAQVIASNVYSDIKGRFEMIISNPPFHDGIQTSLTAAEMLIRGATAHLHVGGKLRIVANSFLPYPALLDAAFGSHEVLAQNGRFKVYQATVGRPPRDPKKKR</sequence>
<organism>
    <name type="scientific">Yersinia pseudotuberculosis serotype I (strain IP32953)</name>
    <dbReference type="NCBI Taxonomy" id="273123"/>
    <lineage>
        <taxon>Bacteria</taxon>
        <taxon>Pseudomonadati</taxon>
        <taxon>Pseudomonadota</taxon>
        <taxon>Gammaproteobacteria</taxon>
        <taxon>Enterobacterales</taxon>
        <taxon>Yersiniaceae</taxon>
        <taxon>Yersinia</taxon>
    </lineage>
</organism>
<name>RSMC_YERPS</name>
<comment type="function">
    <text evidence="1">Specifically methylates the guanine in position 1207 of 16S rRNA in the 30S particle.</text>
</comment>
<comment type="catalytic activity">
    <reaction evidence="1">
        <text>guanosine(1207) in 16S rRNA + S-adenosyl-L-methionine = N(2)-methylguanosine(1207) in 16S rRNA + S-adenosyl-L-homocysteine + H(+)</text>
        <dbReference type="Rhea" id="RHEA:42736"/>
        <dbReference type="Rhea" id="RHEA-COMP:10213"/>
        <dbReference type="Rhea" id="RHEA-COMP:10214"/>
        <dbReference type="ChEBI" id="CHEBI:15378"/>
        <dbReference type="ChEBI" id="CHEBI:57856"/>
        <dbReference type="ChEBI" id="CHEBI:59789"/>
        <dbReference type="ChEBI" id="CHEBI:74269"/>
        <dbReference type="ChEBI" id="CHEBI:74481"/>
        <dbReference type="EC" id="2.1.1.172"/>
    </reaction>
</comment>
<comment type="subunit">
    <text evidence="1">Monomer.</text>
</comment>
<comment type="subcellular location">
    <subcellularLocation>
        <location evidence="1">Cytoplasm</location>
    </subcellularLocation>
</comment>
<comment type="similarity">
    <text evidence="1">Belongs to the methyltransferase superfamily. RsmC family.</text>
</comment>
<proteinExistence type="inferred from homology"/>
<reference key="1">
    <citation type="journal article" date="2004" name="Proc. Natl. Acad. Sci. U.S.A.">
        <title>Insights into the evolution of Yersinia pestis through whole-genome comparison with Yersinia pseudotuberculosis.</title>
        <authorList>
            <person name="Chain P.S.G."/>
            <person name="Carniel E."/>
            <person name="Larimer F.W."/>
            <person name="Lamerdin J."/>
            <person name="Stoutland P.O."/>
            <person name="Regala W.M."/>
            <person name="Georgescu A.M."/>
            <person name="Vergez L.M."/>
            <person name="Land M.L."/>
            <person name="Motin V.L."/>
            <person name="Brubaker R.R."/>
            <person name="Fowler J."/>
            <person name="Hinnebusch J."/>
            <person name="Marceau M."/>
            <person name="Medigue C."/>
            <person name="Simonet M."/>
            <person name="Chenal-Francisque V."/>
            <person name="Souza B."/>
            <person name="Dacheux D."/>
            <person name="Elliott J.M."/>
            <person name="Derbise A."/>
            <person name="Hauser L.J."/>
            <person name="Garcia E."/>
        </authorList>
    </citation>
    <scope>NUCLEOTIDE SEQUENCE [LARGE SCALE GENOMIC DNA]</scope>
    <source>
        <strain>IP32953</strain>
    </source>
</reference>
<gene>
    <name evidence="1" type="primary">rsmC</name>
    <name type="ordered locus">YPTB0572</name>
</gene>
<feature type="chain" id="PRO_0000369805" description="Ribosomal RNA small subunit methyltransferase C">
    <location>
        <begin position="1"/>
        <end position="347"/>
    </location>
</feature>
<dbReference type="EC" id="2.1.1.172" evidence="1"/>
<dbReference type="EMBL" id="BX936398">
    <property type="protein sequence ID" value="CAH19812.1"/>
    <property type="molecule type" value="Genomic_DNA"/>
</dbReference>
<dbReference type="RefSeq" id="WP_011191679.1">
    <property type="nucleotide sequence ID" value="NC_006155.1"/>
</dbReference>
<dbReference type="SMR" id="Q66EW9"/>
<dbReference type="KEGG" id="ypo:BZ17_1987"/>
<dbReference type="KEGG" id="yps:YPTB0572"/>
<dbReference type="PATRIC" id="fig|273123.14.peg.2113"/>
<dbReference type="Proteomes" id="UP000001011">
    <property type="component" value="Chromosome"/>
</dbReference>
<dbReference type="GO" id="GO:0005737">
    <property type="term" value="C:cytoplasm"/>
    <property type="evidence" value="ECO:0007669"/>
    <property type="project" value="UniProtKB-SubCell"/>
</dbReference>
<dbReference type="GO" id="GO:0052914">
    <property type="term" value="F:16S rRNA (guanine(1207)-N(2))-methyltransferase activity"/>
    <property type="evidence" value="ECO:0007669"/>
    <property type="project" value="UniProtKB-EC"/>
</dbReference>
<dbReference type="GO" id="GO:0003676">
    <property type="term" value="F:nucleic acid binding"/>
    <property type="evidence" value="ECO:0007669"/>
    <property type="project" value="InterPro"/>
</dbReference>
<dbReference type="CDD" id="cd02440">
    <property type="entry name" value="AdoMet_MTases"/>
    <property type="match status" value="1"/>
</dbReference>
<dbReference type="Gene3D" id="3.40.50.150">
    <property type="entry name" value="Vaccinia Virus protein VP39"/>
    <property type="match status" value="2"/>
</dbReference>
<dbReference type="HAMAP" id="MF_01862">
    <property type="entry name" value="16SrRNA_methyltr_C"/>
    <property type="match status" value="1"/>
</dbReference>
<dbReference type="InterPro" id="IPR002052">
    <property type="entry name" value="DNA_methylase_N6_adenine_CS"/>
</dbReference>
<dbReference type="InterPro" id="IPR013675">
    <property type="entry name" value="Mtase_sm_N"/>
</dbReference>
<dbReference type="InterPro" id="IPR023543">
    <property type="entry name" value="rRNA_ssu_MeTfrase_C"/>
</dbReference>
<dbReference type="InterPro" id="IPR046977">
    <property type="entry name" value="RsmC/RlmG"/>
</dbReference>
<dbReference type="InterPro" id="IPR029063">
    <property type="entry name" value="SAM-dependent_MTases_sf"/>
</dbReference>
<dbReference type="InterPro" id="IPR007848">
    <property type="entry name" value="Small_mtfrase_dom"/>
</dbReference>
<dbReference type="NCBIfam" id="NF007023">
    <property type="entry name" value="PRK09489.1"/>
    <property type="match status" value="1"/>
</dbReference>
<dbReference type="PANTHER" id="PTHR47816">
    <property type="entry name" value="RIBOSOMAL RNA SMALL SUBUNIT METHYLTRANSFERASE C"/>
    <property type="match status" value="1"/>
</dbReference>
<dbReference type="PANTHER" id="PTHR47816:SF4">
    <property type="entry name" value="RIBOSOMAL RNA SMALL SUBUNIT METHYLTRANSFERASE C"/>
    <property type="match status" value="1"/>
</dbReference>
<dbReference type="Pfam" id="PF05175">
    <property type="entry name" value="MTS"/>
    <property type="match status" value="1"/>
</dbReference>
<dbReference type="Pfam" id="PF08468">
    <property type="entry name" value="MTS_N"/>
    <property type="match status" value="1"/>
</dbReference>
<dbReference type="SUPFAM" id="SSF53335">
    <property type="entry name" value="S-adenosyl-L-methionine-dependent methyltransferases"/>
    <property type="match status" value="1"/>
</dbReference>
<keyword id="KW-0963">Cytoplasm</keyword>
<keyword id="KW-0489">Methyltransferase</keyword>
<keyword id="KW-0698">rRNA processing</keyword>
<keyword id="KW-0949">S-adenosyl-L-methionine</keyword>
<keyword id="KW-0808">Transferase</keyword>
<accession>Q66EW9</accession>
<evidence type="ECO:0000255" key="1">
    <source>
        <dbReference type="HAMAP-Rule" id="MF_01862"/>
    </source>
</evidence>